<dbReference type="EC" id="3.5.1.5" evidence="1"/>
<dbReference type="EMBL" id="BA000040">
    <property type="protein sequence ID" value="BAC46719.1"/>
    <property type="molecule type" value="Genomic_DNA"/>
</dbReference>
<dbReference type="RefSeq" id="NP_768094.1">
    <property type="nucleotide sequence ID" value="NC_004463.1"/>
</dbReference>
<dbReference type="RefSeq" id="WP_007605424.1">
    <property type="nucleotide sequence ID" value="NZ_CP011360.1"/>
</dbReference>
<dbReference type="SMR" id="Q89UG3"/>
<dbReference type="STRING" id="224911.AAV28_04215"/>
<dbReference type="EnsemblBacteria" id="BAC46719">
    <property type="protein sequence ID" value="BAC46719"/>
    <property type="gene ID" value="BAC46719"/>
</dbReference>
<dbReference type="KEGG" id="bja:blr1454"/>
<dbReference type="PATRIC" id="fig|224911.44.peg.885"/>
<dbReference type="eggNOG" id="COG0831">
    <property type="taxonomic scope" value="Bacteria"/>
</dbReference>
<dbReference type="HOGENOM" id="CLU_145825_1_0_5"/>
<dbReference type="InParanoid" id="Q89UG3"/>
<dbReference type="OrthoDB" id="9797217at2"/>
<dbReference type="PhylomeDB" id="Q89UG3"/>
<dbReference type="UniPathway" id="UPA00258">
    <property type="reaction ID" value="UER00370"/>
</dbReference>
<dbReference type="Proteomes" id="UP000002526">
    <property type="component" value="Chromosome"/>
</dbReference>
<dbReference type="GO" id="GO:0005737">
    <property type="term" value="C:cytoplasm"/>
    <property type="evidence" value="ECO:0007669"/>
    <property type="project" value="UniProtKB-SubCell"/>
</dbReference>
<dbReference type="GO" id="GO:0016151">
    <property type="term" value="F:nickel cation binding"/>
    <property type="evidence" value="ECO:0007669"/>
    <property type="project" value="InterPro"/>
</dbReference>
<dbReference type="GO" id="GO:0009039">
    <property type="term" value="F:urease activity"/>
    <property type="evidence" value="ECO:0007669"/>
    <property type="project" value="UniProtKB-UniRule"/>
</dbReference>
<dbReference type="GO" id="GO:0043419">
    <property type="term" value="P:urea catabolic process"/>
    <property type="evidence" value="ECO:0007669"/>
    <property type="project" value="UniProtKB-UniRule"/>
</dbReference>
<dbReference type="CDD" id="cd00390">
    <property type="entry name" value="Urease_gamma"/>
    <property type="match status" value="1"/>
</dbReference>
<dbReference type="Gene3D" id="3.30.280.10">
    <property type="entry name" value="Urease, gamma-like subunit"/>
    <property type="match status" value="1"/>
</dbReference>
<dbReference type="HAMAP" id="MF_00739">
    <property type="entry name" value="Urease_gamma"/>
    <property type="match status" value="1"/>
</dbReference>
<dbReference type="InterPro" id="IPR012010">
    <property type="entry name" value="Urease_gamma"/>
</dbReference>
<dbReference type="InterPro" id="IPR002026">
    <property type="entry name" value="Urease_gamma/gamma-beta_su"/>
</dbReference>
<dbReference type="InterPro" id="IPR036463">
    <property type="entry name" value="Urease_gamma_sf"/>
</dbReference>
<dbReference type="InterPro" id="IPR050069">
    <property type="entry name" value="Urease_subunit"/>
</dbReference>
<dbReference type="NCBIfam" id="NF009712">
    <property type="entry name" value="PRK13241.1"/>
    <property type="match status" value="1"/>
</dbReference>
<dbReference type="NCBIfam" id="TIGR00193">
    <property type="entry name" value="urease_gam"/>
    <property type="match status" value="1"/>
</dbReference>
<dbReference type="PANTHER" id="PTHR33569">
    <property type="entry name" value="UREASE"/>
    <property type="match status" value="1"/>
</dbReference>
<dbReference type="PANTHER" id="PTHR33569:SF1">
    <property type="entry name" value="UREASE"/>
    <property type="match status" value="1"/>
</dbReference>
<dbReference type="Pfam" id="PF00547">
    <property type="entry name" value="Urease_gamma"/>
    <property type="match status" value="1"/>
</dbReference>
<dbReference type="PIRSF" id="PIRSF001223">
    <property type="entry name" value="Urease_gamma"/>
    <property type="match status" value="1"/>
</dbReference>
<dbReference type="SUPFAM" id="SSF54111">
    <property type="entry name" value="Urease, gamma-subunit"/>
    <property type="match status" value="1"/>
</dbReference>
<feature type="chain" id="PRO_0000097997" description="Urease subunit gamma">
    <location>
        <begin position="1"/>
        <end position="100"/>
    </location>
</feature>
<gene>
    <name evidence="1" type="primary">ureA</name>
    <name type="ordered locus">blr1454</name>
</gene>
<comment type="catalytic activity">
    <reaction evidence="1">
        <text>urea + 2 H2O + H(+) = hydrogencarbonate + 2 NH4(+)</text>
        <dbReference type="Rhea" id="RHEA:20557"/>
        <dbReference type="ChEBI" id="CHEBI:15377"/>
        <dbReference type="ChEBI" id="CHEBI:15378"/>
        <dbReference type="ChEBI" id="CHEBI:16199"/>
        <dbReference type="ChEBI" id="CHEBI:17544"/>
        <dbReference type="ChEBI" id="CHEBI:28938"/>
        <dbReference type="EC" id="3.5.1.5"/>
    </reaction>
</comment>
<comment type="pathway">
    <text evidence="1">Nitrogen metabolism; urea degradation; CO(2) and NH(3) from urea (urease route): step 1/1.</text>
</comment>
<comment type="subunit">
    <text evidence="1">Heterotrimer of UreA (gamma), UreB (beta) and UreC (alpha) subunits. Three heterotrimers associate to form the active enzyme.</text>
</comment>
<comment type="subcellular location">
    <subcellularLocation>
        <location evidence="1">Cytoplasm</location>
    </subcellularLocation>
</comment>
<comment type="similarity">
    <text evidence="1">Belongs to the urease gamma subunit family.</text>
</comment>
<name>URE3_BRADU</name>
<keyword id="KW-0963">Cytoplasm</keyword>
<keyword id="KW-0378">Hydrolase</keyword>
<keyword id="KW-1185">Reference proteome</keyword>
<evidence type="ECO:0000255" key="1">
    <source>
        <dbReference type="HAMAP-Rule" id="MF_00739"/>
    </source>
</evidence>
<accession>Q89UG3</accession>
<proteinExistence type="inferred from homology"/>
<organism>
    <name type="scientific">Bradyrhizobium diazoefficiens (strain JCM 10833 / BCRC 13528 / IAM 13628 / NBRC 14792 / USDA 110)</name>
    <dbReference type="NCBI Taxonomy" id="224911"/>
    <lineage>
        <taxon>Bacteria</taxon>
        <taxon>Pseudomonadati</taxon>
        <taxon>Pseudomonadota</taxon>
        <taxon>Alphaproteobacteria</taxon>
        <taxon>Hyphomicrobiales</taxon>
        <taxon>Nitrobacteraceae</taxon>
        <taxon>Bradyrhizobium</taxon>
    </lineage>
</organism>
<reference key="1">
    <citation type="journal article" date="2002" name="DNA Res.">
        <title>Complete genomic sequence of nitrogen-fixing symbiotic bacterium Bradyrhizobium japonicum USDA110.</title>
        <authorList>
            <person name="Kaneko T."/>
            <person name="Nakamura Y."/>
            <person name="Sato S."/>
            <person name="Minamisawa K."/>
            <person name="Uchiumi T."/>
            <person name="Sasamoto S."/>
            <person name="Watanabe A."/>
            <person name="Idesawa K."/>
            <person name="Iriguchi M."/>
            <person name="Kawashima K."/>
            <person name="Kohara M."/>
            <person name="Matsumoto M."/>
            <person name="Shimpo S."/>
            <person name="Tsuruoka H."/>
            <person name="Wada T."/>
            <person name="Yamada M."/>
            <person name="Tabata S."/>
        </authorList>
    </citation>
    <scope>NUCLEOTIDE SEQUENCE [LARGE SCALE GENOMIC DNA]</scope>
    <source>
        <strain>JCM 10833 / BCRC 13528 / IAM 13628 / NBRC 14792 / USDA 110</strain>
    </source>
</reference>
<protein>
    <recommendedName>
        <fullName evidence="1">Urease subunit gamma</fullName>
        <ecNumber evidence="1">3.5.1.5</ecNumber>
    </recommendedName>
    <alternativeName>
        <fullName evidence="1">Urea amidohydrolase subunit gamma</fullName>
    </alternativeName>
</protein>
<sequence length="100" mass="11110">MNLSPREKDKLLISMAAIVARRRLDRGVKLNHPEAIAIISDFILEGARDGRTVAELMQSGAQVLTRDQVMPGIPEMIHDIQVEATFPDGTKLVTVHEPIR</sequence>